<name>Y2534_DEIRA</name>
<proteinExistence type="inferred from homology"/>
<evidence type="ECO:0000256" key="1">
    <source>
        <dbReference type="SAM" id="MobiDB-lite"/>
    </source>
</evidence>
<evidence type="ECO:0000305" key="2"/>
<dbReference type="EMBL" id="AE000513">
    <property type="protein sequence ID" value="AAF12069.1"/>
    <property type="molecule type" value="Genomic_DNA"/>
</dbReference>
<dbReference type="PIR" id="E75263">
    <property type="entry name" value="E75263"/>
</dbReference>
<dbReference type="RefSeq" id="NP_296254.1">
    <property type="nucleotide sequence ID" value="NC_001263.1"/>
</dbReference>
<dbReference type="SMR" id="Q9RRF8"/>
<dbReference type="STRING" id="243230.DR_2534"/>
<dbReference type="PaxDb" id="243230-DR_2534"/>
<dbReference type="EnsemblBacteria" id="AAF12069">
    <property type="protein sequence ID" value="AAF12069"/>
    <property type="gene ID" value="DR_2534"/>
</dbReference>
<dbReference type="KEGG" id="dra:DR_2534"/>
<dbReference type="PATRIC" id="fig|243230.17.peg.2777"/>
<dbReference type="eggNOG" id="COG2320">
    <property type="taxonomic scope" value="Bacteria"/>
</dbReference>
<dbReference type="HOGENOM" id="CLU_086407_4_0_0"/>
<dbReference type="InParanoid" id="Q9RRF8"/>
<dbReference type="OrthoDB" id="9799092at2"/>
<dbReference type="Proteomes" id="UP000002524">
    <property type="component" value="Chromosome 1"/>
</dbReference>
<dbReference type="Gene3D" id="3.30.460.10">
    <property type="entry name" value="Beta Polymerase, domain 2"/>
    <property type="match status" value="1"/>
</dbReference>
<dbReference type="InterPro" id="IPR007344">
    <property type="entry name" value="GrpB/CoaE"/>
</dbReference>
<dbReference type="InterPro" id="IPR043519">
    <property type="entry name" value="NT_sf"/>
</dbReference>
<dbReference type="PANTHER" id="PTHR34822">
    <property type="entry name" value="GRPB DOMAIN PROTEIN (AFU_ORTHOLOGUE AFUA_1G01530)"/>
    <property type="match status" value="1"/>
</dbReference>
<dbReference type="PANTHER" id="PTHR34822:SF1">
    <property type="entry name" value="GRPB FAMILY PROTEIN"/>
    <property type="match status" value="1"/>
</dbReference>
<dbReference type="Pfam" id="PF04229">
    <property type="entry name" value="GrpB"/>
    <property type="match status" value="1"/>
</dbReference>
<dbReference type="SUPFAM" id="SSF81301">
    <property type="entry name" value="Nucleotidyltransferase"/>
    <property type="match status" value="1"/>
</dbReference>
<accession>Q9RRF8</accession>
<sequence length="188" mass="20653">MGRGGRGVGGGRPEGHGASVEGGRTRQTEGMDLISPDPGRWAARFDRHRWRIRLALPQARTEHIGSTAIGTICAKDVVDILVGEVDVTAAAQALVSAGYVIEGERPNHIWLCWPDPQQREAVVHVVIAGGDIWHQRLLFRDFLKRSPAEARAYEALKQRLAAQTDDWGEYTAQKAAFVARILQRAAES</sequence>
<feature type="chain" id="PRO_0000216128" description="UPF0157 protein DR_2534">
    <location>
        <begin position="1"/>
        <end position="188"/>
    </location>
</feature>
<feature type="region of interest" description="Disordered" evidence="1">
    <location>
        <begin position="1"/>
        <end position="37"/>
    </location>
</feature>
<feature type="compositionally biased region" description="Gly residues" evidence="1">
    <location>
        <begin position="1"/>
        <end position="12"/>
    </location>
</feature>
<organism>
    <name type="scientific">Deinococcus radiodurans (strain ATCC 13939 / DSM 20539 / JCM 16871 / CCUG 27074 / LMG 4051 / NBRC 15346 / NCIMB 9279 / VKM B-1422 / R1)</name>
    <dbReference type="NCBI Taxonomy" id="243230"/>
    <lineage>
        <taxon>Bacteria</taxon>
        <taxon>Thermotogati</taxon>
        <taxon>Deinococcota</taxon>
        <taxon>Deinococci</taxon>
        <taxon>Deinococcales</taxon>
        <taxon>Deinococcaceae</taxon>
        <taxon>Deinococcus</taxon>
    </lineage>
</organism>
<protein>
    <recommendedName>
        <fullName>UPF0157 protein DR_2534</fullName>
    </recommendedName>
</protein>
<keyword id="KW-1185">Reference proteome</keyword>
<comment type="similarity">
    <text evidence="2">Belongs to the UPF0157 (GrpB) family.</text>
</comment>
<reference key="1">
    <citation type="journal article" date="1999" name="Science">
        <title>Genome sequence of the radioresistant bacterium Deinococcus radiodurans R1.</title>
        <authorList>
            <person name="White O."/>
            <person name="Eisen J.A."/>
            <person name="Heidelberg J.F."/>
            <person name="Hickey E.K."/>
            <person name="Peterson J.D."/>
            <person name="Dodson R.J."/>
            <person name="Haft D.H."/>
            <person name="Gwinn M.L."/>
            <person name="Nelson W.C."/>
            <person name="Richardson D.L."/>
            <person name="Moffat K.S."/>
            <person name="Qin H."/>
            <person name="Jiang L."/>
            <person name="Pamphile W."/>
            <person name="Crosby M."/>
            <person name="Shen M."/>
            <person name="Vamathevan J.J."/>
            <person name="Lam P."/>
            <person name="McDonald L.A."/>
            <person name="Utterback T.R."/>
            <person name="Zalewski C."/>
            <person name="Makarova K.S."/>
            <person name="Aravind L."/>
            <person name="Daly M.J."/>
            <person name="Minton K.W."/>
            <person name="Fleischmann R.D."/>
            <person name="Ketchum K.A."/>
            <person name="Nelson K.E."/>
            <person name="Salzberg S.L."/>
            <person name="Smith H.O."/>
            <person name="Venter J.C."/>
            <person name="Fraser C.M."/>
        </authorList>
    </citation>
    <scope>NUCLEOTIDE SEQUENCE [LARGE SCALE GENOMIC DNA]</scope>
    <source>
        <strain>ATCC 13939 / DSM 20539 / JCM 16871 / CCUG 27074 / LMG 4051 / NBRC 15346 / NCIMB 9279 / VKM B-1422 / R1</strain>
    </source>
</reference>
<gene>
    <name type="ordered locus">DR_2534</name>
</gene>